<comment type="catalytic activity">
    <reaction evidence="1">
        <text>L-histidinol phosphate + 2-oxoglutarate = 3-(imidazol-4-yl)-2-oxopropyl phosphate + L-glutamate</text>
        <dbReference type="Rhea" id="RHEA:23744"/>
        <dbReference type="ChEBI" id="CHEBI:16810"/>
        <dbReference type="ChEBI" id="CHEBI:29985"/>
        <dbReference type="ChEBI" id="CHEBI:57766"/>
        <dbReference type="ChEBI" id="CHEBI:57980"/>
        <dbReference type="EC" id="2.6.1.9"/>
    </reaction>
</comment>
<comment type="cofactor">
    <cofactor evidence="1">
        <name>pyridoxal 5'-phosphate</name>
        <dbReference type="ChEBI" id="CHEBI:597326"/>
    </cofactor>
</comment>
<comment type="pathway">
    <text evidence="1">Amino-acid biosynthesis; L-histidine biosynthesis; L-histidine from 5-phospho-alpha-D-ribose 1-diphosphate: step 7/9.</text>
</comment>
<comment type="subunit">
    <text evidence="1">Homodimer.</text>
</comment>
<comment type="similarity">
    <text evidence="1">Belongs to the class-II pyridoxal-phosphate-dependent aminotransferase family. Histidinol-phosphate aminotransferase subfamily.</text>
</comment>
<sequence>MAFSLDSILRDNIKNAKPYSSARDEYKGTEGIFLDANENPYGSAIQKMVNRYPDPLQRDVKTALSALKNVSAEHIFFGNGSDEPIDLLIRATCQPGKDSILILPPTYGMYEVSAGINDVDIISVPLTKAFDLDVDAILAAVKTHTKIIFICSPNNPTGNLMSEDKVKRILNAFSGIVVVDEAYIDFADTKGFVPLLDQYPNMVVLQTFSKAWGMAALRLGTAFASKEIVSVLNKIKPPYNINLLTQEAALEALQNVSVKDEMVYKILKQRDWLREELSKLPVCLELYPSDANFILMRTADGKKVYDYLVEHIVITRDRSKIILCEGCVRITVGTEAENKRLLDVLKTY</sequence>
<gene>
    <name evidence="1" type="primary">hisC</name>
    <name type="ordered locus">CHU_1269</name>
</gene>
<dbReference type="EC" id="2.6.1.9" evidence="1"/>
<dbReference type="EMBL" id="CP000383">
    <property type="protein sequence ID" value="ABG58541.1"/>
    <property type="molecule type" value="Genomic_DNA"/>
</dbReference>
<dbReference type="RefSeq" id="WP_011584656.1">
    <property type="nucleotide sequence ID" value="NC_008255.1"/>
</dbReference>
<dbReference type="SMR" id="Q11VM5"/>
<dbReference type="STRING" id="269798.CHU_1269"/>
<dbReference type="KEGG" id="chu:CHU_1269"/>
<dbReference type="eggNOG" id="COG0079">
    <property type="taxonomic scope" value="Bacteria"/>
</dbReference>
<dbReference type="HOGENOM" id="CLU_017584_3_1_10"/>
<dbReference type="OrthoDB" id="9813612at2"/>
<dbReference type="UniPathway" id="UPA00031">
    <property type="reaction ID" value="UER00012"/>
</dbReference>
<dbReference type="Proteomes" id="UP000001822">
    <property type="component" value="Chromosome"/>
</dbReference>
<dbReference type="GO" id="GO:0004400">
    <property type="term" value="F:histidinol-phosphate transaminase activity"/>
    <property type="evidence" value="ECO:0007669"/>
    <property type="project" value="UniProtKB-UniRule"/>
</dbReference>
<dbReference type="GO" id="GO:0030170">
    <property type="term" value="F:pyridoxal phosphate binding"/>
    <property type="evidence" value="ECO:0007669"/>
    <property type="project" value="InterPro"/>
</dbReference>
<dbReference type="GO" id="GO:0000105">
    <property type="term" value="P:L-histidine biosynthetic process"/>
    <property type="evidence" value="ECO:0007669"/>
    <property type="project" value="UniProtKB-UniRule"/>
</dbReference>
<dbReference type="CDD" id="cd00609">
    <property type="entry name" value="AAT_like"/>
    <property type="match status" value="1"/>
</dbReference>
<dbReference type="Gene3D" id="3.90.1150.10">
    <property type="entry name" value="Aspartate Aminotransferase, domain 1"/>
    <property type="match status" value="1"/>
</dbReference>
<dbReference type="Gene3D" id="3.40.640.10">
    <property type="entry name" value="Type I PLP-dependent aspartate aminotransferase-like (Major domain)"/>
    <property type="match status" value="1"/>
</dbReference>
<dbReference type="HAMAP" id="MF_01023">
    <property type="entry name" value="HisC_aminotrans_2"/>
    <property type="match status" value="1"/>
</dbReference>
<dbReference type="InterPro" id="IPR001917">
    <property type="entry name" value="Aminotrans_II_pyridoxalP_BS"/>
</dbReference>
<dbReference type="InterPro" id="IPR004839">
    <property type="entry name" value="Aminotransferase_I/II_large"/>
</dbReference>
<dbReference type="InterPro" id="IPR005861">
    <property type="entry name" value="HisP_aminotrans"/>
</dbReference>
<dbReference type="InterPro" id="IPR015424">
    <property type="entry name" value="PyrdxlP-dep_Trfase"/>
</dbReference>
<dbReference type="InterPro" id="IPR015421">
    <property type="entry name" value="PyrdxlP-dep_Trfase_major"/>
</dbReference>
<dbReference type="InterPro" id="IPR015422">
    <property type="entry name" value="PyrdxlP-dep_Trfase_small"/>
</dbReference>
<dbReference type="NCBIfam" id="TIGR01141">
    <property type="entry name" value="hisC"/>
    <property type="match status" value="1"/>
</dbReference>
<dbReference type="PANTHER" id="PTHR42885:SF2">
    <property type="entry name" value="HISTIDINOL-PHOSPHATE AMINOTRANSFERASE"/>
    <property type="match status" value="1"/>
</dbReference>
<dbReference type="PANTHER" id="PTHR42885">
    <property type="entry name" value="HISTIDINOL-PHOSPHATE AMINOTRANSFERASE-RELATED"/>
    <property type="match status" value="1"/>
</dbReference>
<dbReference type="Pfam" id="PF00155">
    <property type="entry name" value="Aminotran_1_2"/>
    <property type="match status" value="1"/>
</dbReference>
<dbReference type="SUPFAM" id="SSF53383">
    <property type="entry name" value="PLP-dependent transferases"/>
    <property type="match status" value="1"/>
</dbReference>
<dbReference type="PROSITE" id="PS00599">
    <property type="entry name" value="AA_TRANSFER_CLASS_2"/>
    <property type="match status" value="1"/>
</dbReference>
<feature type="chain" id="PRO_0000319753" description="Histidinol-phosphate aminotransferase">
    <location>
        <begin position="1"/>
        <end position="348"/>
    </location>
</feature>
<feature type="modified residue" description="N6-(pyridoxal phosphate)lysine" evidence="1">
    <location>
        <position position="210"/>
    </location>
</feature>
<reference key="1">
    <citation type="journal article" date="2007" name="Appl. Environ. Microbiol.">
        <title>Genome sequence of the cellulolytic gliding bacterium Cytophaga hutchinsonii.</title>
        <authorList>
            <person name="Xie G."/>
            <person name="Bruce D.C."/>
            <person name="Challacombe J.F."/>
            <person name="Chertkov O."/>
            <person name="Detter J.C."/>
            <person name="Gilna P."/>
            <person name="Han C.S."/>
            <person name="Lucas S."/>
            <person name="Misra M."/>
            <person name="Myers G.L."/>
            <person name="Richardson P."/>
            <person name="Tapia R."/>
            <person name="Thayer N."/>
            <person name="Thompson L.S."/>
            <person name="Brettin T.S."/>
            <person name="Henrissat B."/>
            <person name="Wilson D.B."/>
            <person name="McBride M.J."/>
        </authorList>
    </citation>
    <scope>NUCLEOTIDE SEQUENCE [LARGE SCALE GENOMIC DNA]</scope>
    <source>
        <strain>ATCC 33406 / DSM 1761 / JCM 20678 / CIP 103989 / IAM 12607 / NBRC 15051 / NCIMB 9469 / D465</strain>
    </source>
</reference>
<proteinExistence type="inferred from homology"/>
<accession>Q11VM5</accession>
<organism>
    <name type="scientific">Cytophaga hutchinsonii (strain ATCC 33406 / DSM 1761 / CIP 103989 / NBRC 15051 / NCIMB 9469 / D465)</name>
    <dbReference type="NCBI Taxonomy" id="269798"/>
    <lineage>
        <taxon>Bacteria</taxon>
        <taxon>Pseudomonadati</taxon>
        <taxon>Bacteroidota</taxon>
        <taxon>Cytophagia</taxon>
        <taxon>Cytophagales</taxon>
        <taxon>Cytophagaceae</taxon>
        <taxon>Cytophaga</taxon>
    </lineage>
</organism>
<name>HIS8_CYTH3</name>
<keyword id="KW-0028">Amino-acid biosynthesis</keyword>
<keyword id="KW-0032">Aminotransferase</keyword>
<keyword id="KW-0368">Histidine biosynthesis</keyword>
<keyword id="KW-0663">Pyridoxal phosphate</keyword>
<keyword id="KW-1185">Reference proteome</keyword>
<keyword id="KW-0808">Transferase</keyword>
<evidence type="ECO:0000255" key="1">
    <source>
        <dbReference type="HAMAP-Rule" id="MF_01023"/>
    </source>
</evidence>
<protein>
    <recommendedName>
        <fullName evidence="1">Histidinol-phosphate aminotransferase</fullName>
        <ecNumber evidence="1">2.6.1.9</ecNumber>
    </recommendedName>
    <alternativeName>
        <fullName evidence="1">Imidazole acetol-phosphate transaminase</fullName>
    </alternativeName>
</protein>